<keyword id="KW-0687">Ribonucleoprotein</keyword>
<keyword id="KW-0689">Ribosomal protein</keyword>
<organism>
    <name type="scientific">Saccharolobus islandicus (strain Y.G.57.14 / Yellowstone #1)</name>
    <name type="common">Sulfolobus islandicus</name>
    <dbReference type="NCBI Taxonomy" id="439386"/>
    <lineage>
        <taxon>Archaea</taxon>
        <taxon>Thermoproteota</taxon>
        <taxon>Thermoprotei</taxon>
        <taxon>Sulfolobales</taxon>
        <taxon>Sulfolobaceae</taxon>
        <taxon>Saccharolobus</taxon>
    </lineage>
</organism>
<feature type="chain" id="PRO_1000201979" description="Small ribosomal subunit protein eS8">
    <location>
        <begin position="1"/>
        <end position="133"/>
    </location>
</feature>
<feature type="region of interest" description="Disordered" evidence="2">
    <location>
        <begin position="1"/>
        <end position="22"/>
    </location>
</feature>
<protein>
    <recommendedName>
        <fullName evidence="1">Small ribosomal subunit protein eS8</fullName>
    </recommendedName>
    <alternativeName>
        <fullName evidence="3">30S ribosomal protein S8e</fullName>
    </alternativeName>
</protein>
<proteinExistence type="inferred from homology"/>
<sequence length="133" mass="14502">MGFYQGPDNRKITGGLKGKHRDKRKYEIGNPSTLTTLSAEDIRIKDRTLGGNFKVRLKYTTTANVLDPATNTAKKVKILEVLETPANKELARRGIIIRGAKIRTEAGLAVVTSRPGQDGVINAVLLKNESQGS</sequence>
<comment type="subunit">
    <text evidence="1">Part of the 30S ribosomal subunit.</text>
</comment>
<comment type="similarity">
    <text evidence="1">Belongs to the eukaryotic ribosomal protein eS8 family.</text>
</comment>
<gene>
    <name evidence="1" type="primary">rps8e</name>
    <name type="ordered locus">YG5714_2099</name>
</gene>
<name>RS8E_SACI7</name>
<reference key="1">
    <citation type="journal article" date="2009" name="Proc. Natl. Acad. Sci. U.S.A.">
        <title>Biogeography of the Sulfolobus islandicus pan-genome.</title>
        <authorList>
            <person name="Reno M.L."/>
            <person name="Held N.L."/>
            <person name="Fields C.J."/>
            <person name="Burke P.V."/>
            <person name="Whitaker R.J."/>
        </authorList>
    </citation>
    <scope>NUCLEOTIDE SEQUENCE [LARGE SCALE GENOMIC DNA]</scope>
    <source>
        <strain>Y.G.57.14 / Yellowstone #1</strain>
    </source>
</reference>
<dbReference type="EMBL" id="CP001403">
    <property type="protein sequence ID" value="ACP46351.1"/>
    <property type="molecule type" value="Genomic_DNA"/>
</dbReference>
<dbReference type="RefSeq" id="WP_012714112.1">
    <property type="nucleotide sequence ID" value="NC_012622.1"/>
</dbReference>
<dbReference type="BMRB" id="C3N864"/>
<dbReference type="SMR" id="C3N864"/>
<dbReference type="KEGG" id="siy:YG5714_2099"/>
<dbReference type="HOGENOM" id="CLU_080597_2_1_2"/>
<dbReference type="Proteomes" id="UP000002308">
    <property type="component" value="Chromosome"/>
</dbReference>
<dbReference type="GO" id="GO:1990904">
    <property type="term" value="C:ribonucleoprotein complex"/>
    <property type="evidence" value="ECO:0007669"/>
    <property type="project" value="UniProtKB-KW"/>
</dbReference>
<dbReference type="GO" id="GO:0005840">
    <property type="term" value="C:ribosome"/>
    <property type="evidence" value="ECO:0007669"/>
    <property type="project" value="UniProtKB-KW"/>
</dbReference>
<dbReference type="GO" id="GO:0003735">
    <property type="term" value="F:structural constituent of ribosome"/>
    <property type="evidence" value="ECO:0007669"/>
    <property type="project" value="InterPro"/>
</dbReference>
<dbReference type="GO" id="GO:0006412">
    <property type="term" value="P:translation"/>
    <property type="evidence" value="ECO:0007669"/>
    <property type="project" value="UniProtKB-UniRule"/>
</dbReference>
<dbReference type="CDD" id="cd11382">
    <property type="entry name" value="Ribosomal_S8e"/>
    <property type="match status" value="1"/>
</dbReference>
<dbReference type="FunFam" id="2.40.10.310:FF:000002">
    <property type="entry name" value="30S ribosomal protein S8e"/>
    <property type="match status" value="1"/>
</dbReference>
<dbReference type="Gene3D" id="2.40.10.310">
    <property type="match status" value="1"/>
</dbReference>
<dbReference type="HAMAP" id="MF_00029">
    <property type="entry name" value="Ribosomal_eS8"/>
    <property type="match status" value="1"/>
</dbReference>
<dbReference type="InterPro" id="IPR001047">
    <property type="entry name" value="Ribosomal_eS8"/>
</dbReference>
<dbReference type="InterPro" id="IPR018283">
    <property type="entry name" value="Ribosomal_eS8_CS"/>
</dbReference>
<dbReference type="InterPro" id="IPR020919">
    <property type="entry name" value="Ribosomal_protein_eS8_arc"/>
</dbReference>
<dbReference type="InterPro" id="IPR022309">
    <property type="entry name" value="Ribosomal_Se8/biogenesis_NSA2"/>
</dbReference>
<dbReference type="NCBIfam" id="TIGR00307">
    <property type="entry name" value="eS8"/>
    <property type="match status" value="1"/>
</dbReference>
<dbReference type="PANTHER" id="PTHR10394">
    <property type="entry name" value="40S RIBOSOMAL PROTEIN S8"/>
    <property type="match status" value="1"/>
</dbReference>
<dbReference type="Pfam" id="PF01201">
    <property type="entry name" value="Ribosomal_S8e"/>
    <property type="match status" value="1"/>
</dbReference>
<dbReference type="PROSITE" id="PS01193">
    <property type="entry name" value="RIBOSOMAL_S8E"/>
    <property type="match status" value="1"/>
</dbReference>
<accession>C3N864</accession>
<evidence type="ECO:0000255" key="1">
    <source>
        <dbReference type="HAMAP-Rule" id="MF_00029"/>
    </source>
</evidence>
<evidence type="ECO:0000256" key="2">
    <source>
        <dbReference type="SAM" id="MobiDB-lite"/>
    </source>
</evidence>
<evidence type="ECO:0000305" key="3"/>